<comment type="subcellular location">
    <subcellularLocation>
        <location evidence="3">Membrane</location>
        <topology evidence="3">Single-pass membrane protein</topology>
    </subcellularLocation>
</comment>
<comment type="similarity">
    <text evidence="3">Belongs to the TrbI/VirB10 family.</text>
</comment>
<gene>
    <name type="primary">trbI</name>
    <name type="ordered locus">NGR_a04100</name>
    <name type="ORF">y4dG</name>
</gene>
<feature type="chain" id="PRO_0000065618" description="Probable conjugal transfer protein TrbI">
    <location>
        <begin position="1"/>
        <end position="431"/>
    </location>
</feature>
<feature type="transmembrane region" description="Helical" evidence="1">
    <location>
        <begin position="27"/>
        <end position="47"/>
    </location>
</feature>
<feature type="region of interest" description="Disordered" evidence="2">
    <location>
        <begin position="95"/>
        <end position="122"/>
    </location>
</feature>
<feature type="region of interest" description="Disordered" evidence="2">
    <location>
        <begin position="161"/>
        <end position="189"/>
    </location>
</feature>
<feature type="compositionally biased region" description="Basic and acidic residues" evidence="2">
    <location>
        <begin position="99"/>
        <end position="122"/>
    </location>
</feature>
<feature type="compositionally biased region" description="Polar residues" evidence="2">
    <location>
        <begin position="174"/>
        <end position="189"/>
    </location>
</feature>
<geneLocation type="plasmid">
    <name>sym pNGR234a</name>
</geneLocation>
<dbReference type="EMBL" id="U00090">
    <property type="protein sequence ID" value="AAB92439.1"/>
    <property type="molecule type" value="Genomic_DNA"/>
</dbReference>
<dbReference type="RefSeq" id="NP_443816.1">
    <property type="nucleotide sequence ID" value="NC_000914.2"/>
</dbReference>
<dbReference type="RefSeq" id="WP_010875420.1">
    <property type="nucleotide sequence ID" value="NC_000914.2"/>
</dbReference>
<dbReference type="SMR" id="P55406"/>
<dbReference type="KEGG" id="rhi:NGR_a04100"/>
<dbReference type="PATRIC" id="fig|394.7.peg.431"/>
<dbReference type="eggNOG" id="COG2948">
    <property type="taxonomic scope" value="Bacteria"/>
</dbReference>
<dbReference type="HOGENOM" id="CLU_042657_2_0_5"/>
<dbReference type="OrthoDB" id="9807354at2"/>
<dbReference type="Proteomes" id="UP000001054">
    <property type="component" value="Plasmid pNGR234a"/>
</dbReference>
<dbReference type="GO" id="GO:0016020">
    <property type="term" value="C:membrane"/>
    <property type="evidence" value="ECO:0007669"/>
    <property type="project" value="UniProtKB-SubCell"/>
</dbReference>
<dbReference type="CDD" id="cd16429">
    <property type="entry name" value="VirB10"/>
    <property type="match status" value="1"/>
</dbReference>
<dbReference type="Gene3D" id="2.40.128.260">
    <property type="entry name" value="Type IV secretion system, VirB10/TraB/TrbI"/>
    <property type="match status" value="1"/>
</dbReference>
<dbReference type="InterPro" id="IPR005498">
    <property type="entry name" value="T4SS_VirB10/TraB/TrbI"/>
</dbReference>
<dbReference type="InterPro" id="IPR042217">
    <property type="entry name" value="T4SS_VirB10/TrbI"/>
</dbReference>
<dbReference type="NCBIfam" id="NF010405">
    <property type="entry name" value="PRK13831.1"/>
    <property type="match status" value="1"/>
</dbReference>
<dbReference type="Pfam" id="PF03743">
    <property type="entry name" value="TrbI"/>
    <property type="match status" value="1"/>
</dbReference>
<proteinExistence type="inferred from homology"/>
<sequence>MVQSLRLGAANEAEDQNGMRRLNRLPIIVAIVIVALFVGFVVIGLAWRGLPFNRNNDIHSASNTPATNFGDQLKRGVTDGIIGEPVKREAFQPTPTMKQKVDKEPTVVDRPTEPEERRPRLETEEEWKARLMREQDEQIIREAQRQRMARLQARATALDSPLKVDISEGEKAPKNSTDTGQNPTATENNASDLYPAAMKSGIMGENLDPNAQASKEDFFNQDIKDDGYLPNRVVPQMSVYELKRGSVIPATLITGLNSDLPGRITAQVSQNVYDSATGYRLLIPQGAKLFGRYDSKVSFGQERVLVVWTDLIFPNGSTLQIGGMAGTDAEGYGGFKDRVDRHLWRTWSSAALIALIGTGIDMSMPESSTLATQDTASDAVRRNFAESFGRVAEQTISKNLNVQPTIRIRPGYKFNVLVDQDIIFPSAYRDN</sequence>
<name>TRBI_SINFN</name>
<keyword id="KW-0184">Conjugation</keyword>
<keyword id="KW-0472">Membrane</keyword>
<keyword id="KW-0614">Plasmid</keyword>
<keyword id="KW-1185">Reference proteome</keyword>
<keyword id="KW-0812">Transmembrane</keyword>
<keyword id="KW-1133">Transmembrane helix</keyword>
<organism>
    <name type="scientific">Sinorhizobium fredii (strain NBRC 101917 / NGR234)</name>
    <dbReference type="NCBI Taxonomy" id="394"/>
    <lineage>
        <taxon>Bacteria</taxon>
        <taxon>Pseudomonadati</taxon>
        <taxon>Pseudomonadota</taxon>
        <taxon>Alphaproteobacteria</taxon>
        <taxon>Hyphomicrobiales</taxon>
        <taxon>Rhizobiaceae</taxon>
        <taxon>Sinorhizobium/Ensifer group</taxon>
        <taxon>Sinorhizobium</taxon>
    </lineage>
</organism>
<reference key="1">
    <citation type="journal article" date="1997" name="Nature">
        <title>Molecular basis of symbiosis between Rhizobium and legumes.</title>
        <authorList>
            <person name="Freiberg C.A."/>
            <person name="Fellay R."/>
            <person name="Bairoch A."/>
            <person name="Broughton W.J."/>
            <person name="Rosenthal A."/>
            <person name="Perret X."/>
        </authorList>
    </citation>
    <scope>NUCLEOTIDE SEQUENCE [LARGE SCALE GENOMIC DNA]</scope>
    <source>
        <strain>NBRC 101917 / NGR234</strain>
    </source>
</reference>
<reference key="2">
    <citation type="journal article" date="2009" name="Appl. Environ. Microbiol.">
        <title>Rhizobium sp. strain NGR234 possesses a remarkable number of secretion systems.</title>
        <authorList>
            <person name="Schmeisser C."/>
            <person name="Liesegang H."/>
            <person name="Krysciak D."/>
            <person name="Bakkou N."/>
            <person name="Le Quere A."/>
            <person name="Wollherr A."/>
            <person name="Heinemeyer I."/>
            <person name="Morgenstern B."/>
            <person name="Pommerening-Roeser A."/>
            <person name="Flores M."/>
            <person name="Palacios R."/>
            <person name="Brenner S."/>
            <person name="Gottschalk G."/>
            <person name="Schmitz R.A."/>
            <person name="Broughton W.J."/>
            <person name="Perret X."/>
            <person name="Strittmatter A.W."/>
            <person name="Streit W.R."/>
        </authorList>
    </citation>
    <scope>NUCLEOTIDE SEQUENCE [LARGE SCALE GENOMIC DNA]</scope>
    <source>
        <strain>NBRC 101917 / NGR234</strain>
    </source>
</reference>
<protein>
    <recommendedName>
        <fullName>Probable conjugal transfer protein TrbI</fullName>
    </recommendedName>
</protein>
<accession>P55406</accession>
<evidence type="ECO:0000255" key="1"/>
<evidence type="ECO:0000256" key="2">
    <source>
        <dbReference type="SAM" id="MobiDB-lite"/>
    </source>
</evidence>
<evidence type="ECO:0000305" key="3"/>